<reference key="1">
    <citation type="journal article" date="2008" name="J. Bacteriol.">
        <title>The complete genome sequence of Escherichia coli DH10B: insights into the biology of a laboratory workhorse.</title>
        <authorList>
            <person name="Durfee T."/>
            <person name="Nelson R."/>
            <person name="Baldwin S."/>
            <person name="Plunkett G. III"/>
            <person name="Burland V."/>
            <person name="Mau B."/>
            <person name="Petrosino J.F."/>
            <person name="Qin X."/>
            <person name="Muzny D.M."/>
            <person name="Ayele M."/>
            <person name="Gibbs R.A."/>
            <person name="Csorgo B."/>
            <person name="Posfai G."/>
            <person name="Weinstock G.M."/>
            <person name="Blattner F.R."/>
        </authorList>
    </citation>
    <scope>NUCLEOTIDE SEQUENCE [LARGE SCALE GENOMIC DNA]</scope>
    <source>
        <strain>K12 / DH10B</strain>
    </source>
</reference>
<organism>
    <name type="scientific">Escherichia coli (strain K12 / DH10B)</name>
    <dbReference type="NCBI Taxonomy" id="316385"/>
    <lineage>
        <taxon>Bacteria</taxon>
        <taxon>Pseudomonadati</taxon>
        <taxon>Pseudomonadota</taxon>
        <taxon>Gammaproteobacteria</taxon>
        <taxon>Enterobacterales</taxon>
        <taxon>Enterobacteriaceae</taxon>
        <taxon>Escherichia</taxon>
    </lineage>
</organism>
<sequence length="590" mass="65913">MRTEYCGQLRLSHVGQQVTLCGWVNRRRDLGSLIFIDMRDREGIVQVFFDPDRADALKLASELRNEFCIQVTGTVRARDEKNINRDMATGEIEVLASSLTIINRADVLPLDSNHVNTEEARLKYRYLDLRRPEMAQRLKTRAKITSLVRRFMDDHGFLDIETPMLTKATPEGARDYLVPSRVHKGKFYALPQSPQLFKQLLMMSGFDRYYQIVKCFRDEDLRADRQPEFTQIDVETSFMTAPQVREVMEALVRHLWLEVKGVDLGDFPVMTFAEAERRYGSDKPDLRNPMELTDVADLLKSVEFAVFAGPANDPKGRVAALRVPGGASLTRKQIDEYGNFVKIYGAKGLAYIKVNERAKGLEGINSPVAKFLNAEIIEDILDRTAAQDGDMIFFGADNKKIVADAMGALRLKVGKDLGLTDESKWAPLWVIDFPMFEDDGEGGLTAMHHPFTSPKDMTAAELKAAPENAVANAYDMVINGYEVGGGSVRIHNGDMQQTVFGILGINEEEQREKFGFLLDALKYGTPPHAGLAFGLDRLTMLLTGTDNIRDVIAFPKTTAAACLMTEAPSFANPTALAELSIQVVKKAENN</sequence>
<proteinExistence type="inferred from homology"/>
<comment type="function">
    <text evidence="1">Catalyzes the attachment of L-aspartate to tRNA(Asp) in a two-step reaction: L-aspartate is first activated by ATP to form Asp-AMP and then transferred to the acceptor end of tRNA(Asp).</text>
</comment>
<comment type="catalytic activity">
    <reaction evidence="1">
        <text>tRNA(Asp) + L-aspartate + ATP = L-aspartyl-tRNA(Asp) + AMP + diphosphate</text>
        <dbReference type="Rhea" id="RHEA:19649"/>
        <dbReference type="Rhea" id="RHEA-COMP:9660"/>
        <dbReference type="Rhea" id="RHEA-COMP:9678"/>
        <dbReference type="ChEBI" id="CHEBI:29991"/>
        <dbReference type="ChEBI" id="CHEBI:30616"/>
        <dbReference type="ChEBI" id="CHEBI:33019"/>
        <dbReference type="ChEBI" id="CHEBI:78442"/>
        <dbReference type="ChEBI" id="CHEBI:78516"/>
        <dbReference type="ChEBI" id="CHEBI:456215"/>
        <dbReference type="EC" id="6.1.1.12"/>
    </reaction>
</comment>
<comment type="subunit">
    <text evidence="1">Homodimer.</text>
</comment>
<comment type="subcellular location">
    <subcellularLocation>
        <location evidence="1">Cytoplasm</location>
    </subcellularLocation>
</comment>
<comment type="similarity">
    <text evidence="1">Belongs to the class-II aminoacyl-tRNA synthetase family. Type 1 subfamily.</text>
</comment>
<feature type="chain" id="PRO_1000090991" description="Aspartate--tRNA ligase">
    <location>
        <begin position="1"/>
        <end position="590"/>
    </location>
</feature>
<feature type="region of interest" description="Aspartate" evidence="1">
    <location>
        <begin position="195"/>
        <end position="198"/>
    </location>
</feature>
<feature type="binding site" evidence="1">
    <location>
        <position position="171"/>
    </location>
    <ligand>
        <name>L-aspartate</name>
        <dbReference type="ChEBI" id="CHEBI:29991"/>
    </ligand>
</feature>
<feature type="binding site" evidence="1">
    <location>
        <begin position="217"/>
        <end position="219"/>
    </location>
    <ligand>
        <name>ATP</name>
        <dbReference type="ChEBI" id="CHEBI:30616"/>
    </ligand>
</feature>
<feature type="binding site" evidence="1">
    <location>
        <position position="217"/>
    </location>
    <ligand>
        <name>L-aspartate</name>
        <dbReference type="ChEBI" id="CHEBI:29991"/>
    </ligand>
</feature>
<feature type="binding site" evidence="1">
    <location>
        <position position="226"/>
    </location>
    <ligand>
        <name>ATP</name>
        <dbReference type="ChEBI" id="CHEBI:30616"/>
    </ligand>
</feature>
<feature type="binding site" evidence="1">
    <location>
        <position position="448"/>
    </location>
    <ligand>
        <name>L-aspartate</name>
        <dbReference type="ChEBI" id="CHEBI:29991"/>
    </ligand>
</feature>
<feature type="binding site" evidence="1">
    <location>
        <position position="482"/>
    </location>
    <ligand>
        <name>ATP</name>
        <dbReference type="ChEBI" id="CHEBI:30616"/>
    </ligand>
</feature>
<feature type="binding site" evidence="1">
    <location>
        <position position="489"/>
    </location>
    <ligand>
        <name>L-aspartate</name>
        <dbReference type="ChEBI" id="CHEBI:29991"/>
    </ligand>
</feature>
<feature type="binding site" evidence="1">
    <location>
        <begin position="534"/>
        <end position="537"/>
    </location>
    <ligand>
        <name>ATP</name>
        <dbReference type="ChEBI" id="CHEBI:30616"/>
    </ligand>
</feature>
<protein>
    <recommendedName>
        <fullName evidence="1">Aspartate--tRNA ligase</fullName>
        <ecNumber evidence="1">6.1.1.12</ecNumber>
    </recommendedName>
    <alternativeName>
        <fullName evidence="1">Aspartyl-tRNA synthetase</fullName>
        <shortName evidence="1">AspRS</shortName>
    </alternativeName>
</protein>
<gene>
    <name evidence="1" type="primary">aspS</name>
    <name type="ordered locus">ECDH10B_2007</name>
</gene>
<name>SYD_ECODH</name>
<dbReference type="EC" id="6.1.1.12" evidence="1"/>
<dbReference type="EMBL" id="CP000948">
    <property type="protein sequence ID" value="ACB03064.1"/>
    <property type="molecule type" value="Genomic_DNA"/>
</dbReference>
<dbReference type="RefSeq" id="WP_001258678.1">
    <property type="nucleotide sequence ID" value="NC_010473.1"/>
</dbReference>
<dbReference type="SMR" id="B1XHD4"/>
<dbReference type="KEGG" id="ecd:ECDH10B_2007"/>
<dbReference type="HOGENOM" id="CLU_014330_3_2_6"/>
<dbReference type="GO" id="GO:0005737">
    <property type="term" value="C:cytoplasm"/>
    <property type="evidence" value="ECO:0007669"/>
    <property type="project" value="UniProtKB-SubCell"/>
</dbReference>
<dbReference type="GO" id="GO:0004815">
    <property type="term" value="F:aspartate-tRNA ligase activity"/>
    <property type="evidence" value="ECO:0007669"/>
    <property type="project" value="UniProtKB-UniRule"/>
</dbReference>
<dbReference type="GO" id="GO:0005524">
    <property type="term" value="F:ATP binding"/>
    <property type="evidence" value="ECO:0007669"/>
    <property type="project" value="UniProtKB-UniRule"/>
</dbReference>
<dbReference type="GO" id="GO:0003676">
    <property type="term" value="F:nucleic acid binding"/>
    <property type="evidence" value="ECO:0007669"/>
    <property type="project" value="InterPro"/>
</dbReference>
<dbReference type="GO" id="GO:0006422">
    <property type="term" value="P:aspartyl-tRNA aminoacylation"/>
    <property type="evidence" value="ECO:0007669"/>
    <property type="project" value="UniProtKB-UniRule"/>
</dbReference>
<dbReference type="CDD" id="cd00777">
    <property type="entry name" value="AspRS_core"/>
    <property type="match status" value="1"/>
</dbReference>
<dbReference type="CDD" id="cd04317">
    <property type="entry name" value="EcAspRS_like_N"/>
    <property type="match status" value="1"/>
</dbReference>
<dbReference type="FunFam" id="2.40.50.140:FF:000080">
    <property type="entry name" value="Aspartate--tRNA ligase"/>
    <property type="match status" value="1"/>
</dbReference>
<dbReference type="FunFam" id="3.30.1360.30:FF:000001">
    <property type="entry name" value="Aspartate--tRNA ligase"/>
    <property type="match status" value="1"/>
</dbReference>
<dbReference type="Gene3D" id="3.30.930.10">
    <property type="entry name" value="Bira Bifunctional Protein, Domain 2"/>
    <property type="match status" value="1"/>
</dbReference>
<dbReference type="Gene3D" id="3.30.1360.30">
    <property type="entry name" value="GAD-like domain"/>
    <property type="match status" value="1"/>
</dbReference>
<dbReference type="Gene3D" id="2.40.50.140">
    <property type="entry name" value="Nucleic acid-binding proteins"/>
    <property type="match status" value="1"/>
</dbReference>
<dbReference type="HAMAP" id="MF_00044">
    <property type="entry name" value="Asp_tRNA_synth_type1"/>
    <property type="match status" value="1"/>
</dbReference>
<dbReference type="InterPro" id="IPR004364">
    <property type="entry name" value="Aa-tRNA-synt_II"/>
</dbReference>
<dbReference type="InterPro" id="IPR006195">
    <property type="entry name" value="aa-tRNA-synth_II"/>
</dbReference>
<dbReference type="InterPro" id="IPR045864">
    <property type="entry name" value="aa-tRNA-synth_II/BPL/LPL"/>
</dbReference>
<dbReference type="InterPro" id="IPR004524">
    <property type="entry name" value="Asp-tRNA-ligase_1"/>
</dbReference>
<dbReference type="InterPro" id="IPR047089">
    <property type="entry name" value="Asp-tRNA-ligase_1_N"/>
</dbReference>
<dbReference type="InterPro" id="IPR002312">
    <property type="entry name" value="Asp/Asn-tRNA-synth_IIb"/>
</dbReference>
<dbReference type="InterPro" id="IPR047090">
    <property type="entry name" value="AspRS_core"/>
</dbReference>
<dbReference type="InterPro" id="IPR004115">
    <property type="entry name" value="GAD-like_sf"/>
</dbReference>
<dbReference type="InterPro" id="IPR029351">
    <property type="entry name" value="GAD_dom"/>
</dbReference>
<dbReference type="InterPro" id="IPR012340">
    <property type="entry name" value="NA-bd_OB-fold"/>
</dbReference>
<dbReference type="InterPro" id="IPR004365">
    <property type="entry name" value="NA-bd_OB_tRNA"/>
</dbReference>
<dbReference type="NCBIfam" id="TIGR00459">
    <property type="entry name" value="aspS_bact"/>
    <property type="match status" value="1"/>
</dbReference>
<dbReference type="NCBIfam" id="NF001750">
    <property type="entry name" value="PRK00476.1"/>
    <property type="match status" value="1"/>
</dbReference>
<dbReference type="PANTHER" id="PTHR22594:SF5">
    <property type="entry name" value="ASPARTATE--TRNA LIGASE, MITOCHONDRIAL"/>
    <property type="match status" value="1"/>
</dbReference>
<dbReference type="PANTHER" id="PTHR22594">
    <property type="entry name" value="ASPARTYL/LYSYL-TRNA SYNTHETASE"/>
    <property type="match status" value="1"/>
</dbReference>
<dbReference type="Pfam" id="PF02938">
    <property type="entry name" value="GAD"/>
    <property type="match status" value="1"/>
</dbReference>
<dbReference type="Pfam" id="PF00152">
    <property type="entry name" value="tRNA-synt_2"/>
    <property type="match status" value="1"/>
</dbReference>
<dbReference type="Pfam" id="PF01336">
    <property type="entry name" value="tRNA_anti-codon"/>
    <property type="match status" value="1"/>
</dbReference>
<dbReference type="PRINTS" id="PR01042">
    <property type="entry name" value="TRNASYNTHASP"/>
</dbReference>
<dbReference type="SUPFAM" id="SSF55681">
    <property type="entry name" value="Class II aaRS and biotin synthetases"/>
    <property type="match status" value="1"/>
</dbReference>
<dbReference type="SUPFAM" id="SSF55261">
    <property type="entry name" value="GAD domain-like"/>
    <property type="match status" value="1"/>
</dbReference>
<dbReference type="SUPFAM" id="SSF50249">
    <property type="entry name" value="Nucleic acid-binding proteins"/>
    <property type="match status" value="1"/>
</dbReference>
<dbReference type="PROSITE" id="PS50862">
    <property type="entry name" value="AA_TRNA_LIGASE_II"/>
    <property type="match status" value="1"/>
</dbReference>
<accession>B1XHD4</accession>
<keyword id="KW-0030">Aminoacyl-tRNA synthetase</keyword>
<keyword id="KW-0067">ATP-binding</keyword>
<keyword id="KW-0963">Cytoplasm</keyword>
<keyword id="KW-0436">Ligase</keyword>
<keyword id="KW-0547">Nucleotide-binding</keyword>
<keyword id="KW-0648">Protein biosynthesis</keyword>
<evidence type="ECO:0000255" key="1">
    <source>
        <dbReference type="HAMAP-Rule" id="MF_00044"/>
    </source>
</evidence>